<keyword id="KW-0687">Ribonucleoprotein</keyword>
<keyword id="KW-0689">Ribosomal protein</keyword>
<keyword id="KW-0694">RNA-binding</keyword>
<keyword id="KW-0699">rRNA-binding</keyword>
<accession>A1JS24</accession>
<reference key="1">
    <citation type="journal article" date="2006" name="PLoS Genet.">
        <title>The complete genome sequence and comparative genome analysis of the high pathogenicity Yersinia enterocolitica strain 8081.</title>
        <authorList>
            <person name="Thomson N.R."/>
            <person name="Howard S."/>
            <person name="Wren B.W."/>
            <person name="Holden M.T.G."/>
            <person name="Crossman L."/>
            <person name="Challis G.L."/>
            <person name="Churcher C."/>
            <person name="Mungall K."/>
            <person name="Brooks K."/>
            <person name="Chillingworth T."/>
            <person name="Feltwell T."/>
            <person name="Abdellah Z."/>
            <person name="Hauser H."/>
            <person name="Jagels K."/>
            <person name="Maddison M."/>
            <person name="Moule S."/>
            <person name="Sanders M."/>
            <person name="Whitehead S."/>
            <person name="Quail M.A."/>
            <person name="Dougan G."/>
            <person name="Parkhill J."/>
            <person name="Prentice M.B."/>
        </authorList>
    </citation>
    <scope>NUCLEOTIDE SEQUENCE [LARGE SCALE GENOMIC DNA]</scope>
    <source>
        <strain>NCTC 13174 / 8081</strain>
    </source>
</reference>
<sequence length="84" mass="9716">MTDQIRTLQGRVVSDKMEKSMVVAIERVVKHPIYGKFIRRTTKLHVHDENNECGIGDVVEIRECRPLSKTKSWTLVRVVEKAIL</sequence>
<gene>
    <name evidence="1" type="primary">rpsQ</name>
    <name type="ordered locus">YE3914</name>
</gene>
<evidence type="ECO:0000255" key="1">
    <source>
        <dbReference type="HAMAP-Rule" id="MF_01345"/>
    </source>
</evidence>
<evidence type="ECO:0000305" key="2"/>
<organism>
    <name type="scientific">Yersinia enterocolitica serotype O:8 / biotype 1B (strain NCTC 13174 / 8081)</name>
    <dbReference type="NCBI Taxonomy" id="393305"/>
    <lineage>
        <taxon>Bacteria</taxon>
        <taxon>Pseudomonadati</taxon>
        <taxon>Pseudomonadota</taxon>
        <taxon>Gammaproteobacteria</taxon>
        <taxon>Enterobacterales</taxon>
        <taxon>Yersiniaceae</taxon>
        <taxon>Yersinia</taxon>
    </lineage>
</organism>
<name>RS17_YERE8</name>
<proteinExistence type="inferred from homology"/>
<protein>
    <recommendedName>
        <fullName evidence="1">Small ribosomal subunit protein uS17</fullName>
    </recommendedName>
    <alternativeName>
        <fullName evidence="2">30S ribosomal protein S17</fullName>
    </alternativeName>
</protein>
<feature type="chain" id="PRO_1000055047" description="Small ribosomal subunit protein uS17">
    <location>
        <begin position="1"/>
        <end position="84"/>
    </location>
</feature>
<comment type="function">
    <text evidence="1">One of the primary rRNA binding proteins, it binds specifically to the 5'-end of 16S ribosomal RNA.</text>
</comment>
<comment type="subunit">
    <text evidence="1">Part of the 30S ribosomal subunit.</text>
</comment>
<comment type="similarity">
    <text evidence="1">Belongs to the universal ribosomal protein uS17 family.</text>
</comment>
<dbReference type="EMBL" id="AM286415">
    <property type="protein sequence ID" value="CAL13933.1"/>
    <property type="molecule type" value="Genomic_DNA"/>
</dbReference>
<dbReference type="RefSeq" id="WP_002228135.1">
    <property type="nucleotide sequence ID" value="NC_008800.1"/>
</dbReference>
<dbReference type="RefSeq" id="YP_001008059.1">
    <property type="nucleotide sequence ID" value="NC_008800.1"/>
</dbReference>
<dbReference type="SMR" id="A1JS24"/>
<dbReference type="GeneID" id="97454240"/>
<dbReference type="KEGG" id="yen:YE3914"/>
<dbReference type="PATRIC" id="fig|393305.7.peg.4164"/>
<dbReference type="eggNOG" id="COG0186">
    <property type="taxonomic scope" value="Bacteria"/>
</dbReference>
<dbReference type="HOGENOM" id="CLU_073626_1_1_6"/>
<dbReference type="OrthoDB" id="9811714at2"/>
<dbReference type="Proteomes" id="UP000000642">
    <property type="component" value="Chromosome"/>
</dbReference>
<dbReference type="GO" id="GO:0022627">
    <property type="term" value="C:cytosolic small ribosomal subunit"/>
    <property type="evidence" value="ECO:0007669"/>
    <property type="project" value="TreeGrafter"/>
</dbReference>
<dbReference type="GO" id="GO:0019843">
    <property type="term" value="F:rRNA binding"/>
    <property type="evidence" value="ECO:0007669"/>
    <property type="project" value="UniProtKB-UniRule"/>
</dbReference>
<dbReference type="GO" id="GO:0003735">
    <property type="term" value="F:structural constituent of ribosome"/>
    <property type="evidence" value="ECO:0007669"/>
    <property type="project" value="InterPro"/>
</dbReference>
<dbReference type="GO" id="GO:0006412">
    <property type="term" value="P:translation"/>
    <property type="evidence" value="ECO:0007669"/>
    <property type="project" value="UniProtKB-UniRule"/>
</dbReference>
<dbReference type="CDD" id="cd00364">
    <property type="entry name" value="Ribosomal_uS17"/>
    <property type="match status" value="1"/>
</dbReference>
<dbReference type="FunFam" id="2.40.50.140:FF:000014">
    <property type="entry name" value="30S ribosomal protein S17"/>
    <property type="match status" value="1"/>
</dbReference>
<dbReference type="Gene3D" id="2.40.50.140">
    <property type="entry name" value="Nucleic acid-binding proteins"/>
    <property type="match status" value="1"/>
</dbReference>
<dbReference type="HAMAP" id="MF_01345_B">
    <property type="entry name" value="Ribosomal_uS17_B"/>
    <property type="match status" value="1"/>
</dbReference>
<dbReference type="InterPro" id="IPR012340">
    <property type="entry name" value="NA-bd_OB-fold"/>
</dbReference>
<dbReference type="InterPro" id="IPR000266">
    <property type="entry name" value="Ribosomal_uS17"/>
</dbReference>
<dbReference type="InterPro" id="IPR019984">
    <property type="entry name" value="Ribosomal_uS17_bact/chlr"/>
</dbReference>
<dbReference type="InterPro" id="IPR019979">
    <property type="entry name" value="Ribosomal_uS17_CS"/>
</dbReference>
<dbReference type="NCBIfam" id="NF004123">
    <property type="entry name" value="PRK05610.1"/>
    <property type="match status" value="1"/>
</dbReference>
<dbReference type="NCBIfam" id="TIGR03635">
    <property type="entry name" value="uS17_bact"/>
    <property type="match status" value="1"/>
</dbReference>
<dbReference type="PANTHER" id="PTHR10744">
    <property type="entry name" value="40S RIBOSOMAL PROTEIN S11 FAMILY MEMBER"/>
    <property type="match status" value="1"/>
</dbReference>
<dbReference type="PANTHER" id="PTHR10744:SF1">
    <property type="entry name" value="SMALL RIBOSOMAL SUBUNIT PROTEIN US17M"/>
    <property type="match status" value="1"/>
</dbReference>
<dbReference type="Pfam" id="PF00366">
    <property type="entry name" value="Ribosomal_S17"/>
    <property type="match status" value="1"/>
</dbReference>
<dbReference type="PRINTS" id="PR00973">
    <property type="entry name" value="RIBOSOMALS17"/>
</dbReference>
<dbReference type="SUPFAM" id="SSF50249">
    <property type="entry name" value="Nucleic acid-binding proteins"/>
    <property type="match status" value="1"/>
</dbReference>
<dbReference type="PROSITE" id="PS00056">
    <property type="entry name" value="RIBOSOMAL_S17"/>
    <property type="match status" value="1"/>
</dbReference>